<name>GLND_BORPA</name>
<protein>
    <recommendedName>
        <fullName evidence="1">Bifunctional uridylyltransferase/uridylyl-removing enzyme</fullName>
        <shortName evidence="1">UTase/UR</shortName>
    </recommendedName>
    <alternativeName>
        <fullName evidence="1">Bifunctional [protein-PII] modification enzyme</fullName>
    </alternativeName>
    <alternativeName>
        <fullName evidence="1">Bifunctional nitrogen sensor protein</fullName>
    </alternativeName>
    <domain>
        <recommendedName>
            <fullName evidence="1">[Protein-PII] uridylyltransferase</fullName>
            <shortName evidence="1">PII uridylyltransferase</shortName>
            <shortName evidence="1">UTase</shortName>
            <ecNumber evidence="1">2.7.7.59</ecNumber>
        </recommendedName>
    </domain>
    <domain>
        <recommendedName>
            <fullName evidence="1">[Protein-PII]-UMP uridylyl-removing enzyme</fullName>
            <shortName evidence="1">UR</shortName>
            <ecNumber evidence="1">3.1.4.-</ecNumber>
        </recommendedName>
    </domain>
</protein>
<evidence type="ECO:0000255" key="1">
    <source>
        <dbReference type="HAMAP-Rule" id="MF_00277"/>
    </source>
</evidence>
<evidence type="ECO:0000255" key="2">
    <source>
        <dbReference type="PROSITE-ProRule" id="PRU01175"/>
    </source>
</evidence>
<evidence type="ECO:0000256" key="3">
    <source>
        <dbReference type="SAM" id="MobiDB-lite"/>
    </source>
</evidence>
<gene>
    <name evidence="1" type="primary">glnD</name>
    <name type="ordered locus">BPP1525</name>
</gene>
<feature type="chain" id="PRO_0000192719" description="Bifunctional uridylyltransferase/uridylyl-removing enzyme">
    <location>
        <begin position="1"/>
        <end position="865"/>
    </location>
</feature>
<feature type="domain" description="HD" evidence="2">
    <location>
        <begin position="437"/>
        <end position="559"/>
    </location>
</feature>
<feature type="domain" description="ACT 1" evidence="1">
    <location>
        <begin position="676"/>
        <end position="762"/>
    </location>
</feature>
<feature type="domain" description="ACT 2" evidence="1">
    <location>
        <begin position="789"/>
        <end position="865"/>
    </location>
</feature>
<feature type="region of interest" description="Uridylyltransferase">
    <location>
        <begin position="1"/>
        <end position="318"/>
    </location>
</feature>
<feature type="region of interest" description="Uridylyl-removing">
    <location>
        <begin position="319"/>
        <end position="675"/>
    </location>
</feature>
<feature type="region of interest" description="Disordered" evidence="3">
    <location>
        <begin position="747"/>
        <end position="767"/>
    </location>
</feature>
<feature type="compositionally biased region" description="Basic residues" evidence="3">
    <location>
        <begin position="751"/>
        <end position="767"/>
    </location>
</feature>
<keyword id="KW-0378">Hydrolase</keyword>
<keyword id="KW-0460">Magnesium</keyword>
<keyword id="KW-0511">Multifunctional enzyme</keyword>
<keyword id="KW-0548">Nucleotidyltransferase</keyword>
<keyword id="KW-0677">Repeat</keyword>
<keyword id="KW-0808">Transferase</keyword>
<accession>Q7WA62</accession>
<organism>
    <name type="scientific">Bordetella parapertussis (strain 12822 / ATCC BAA-587 / NCTC 13253)</name>
    <dbReference type="NCBI Taxonomy" id="257311"/>
    <lineage>
        <taxon>Bacteria</taxon>
        <taxon>Pseudomonadati</taxon>
        <taxon>Pseudomonadota</taxon>
        <taxon>Betaproteobacteria</taxon>
        <taxon>Burkholderiales</taxon>
        <taxon>Alcaligenaceae</taxon>
        <taxon>Bordetella</taxon>
    </lineage>
</organism>
<dbReference type="EC" id="2.7.7.59" evidence="1"/>
<dbReference type="EC" id="3.1.4.-" evidence="1"/>
<dbReference type="EMBL" id="BX640427">
    <property type="protein sequence ID" value="CAE36827.1"/>
    <property type="molecule type" value="Genomic_DNA"/>
</dbReference>
<dbReference type="RefSeq" id="WP_010928077.1">
    <property type="nucleotide sequence ID" value="NC_002928.3"/>
</dbReference>
<dbReference type="SMR" id="Q7WA62"/>
<dbReference type="GeneID" id="93203284"/>
<dbReference type="KEGG" id="bpa:BPP1525"/>
<dbReference type="HOGENOM" id="CLU_012833_1_0_4"/>
<dbReference type="Proteomes" id="UP000001421">
    <property type="component" value="Chromosome"/>
</dbReference>
<dbReference type="GO" id="GO:0008773">
    <property type="term" value="F:[protein-PII] uridylyltransferase activity"/>
    <property type="evidence" value="ECO:0007669"/>
    <property type="project" value="UniProtKB-UniRule"/>
</dbReference>
<dbReference type="GO" id="GO:0008081">
    <property type="term" value="F:phosphoric diester hydrolase activity"/>
    <property type="evidence" value="ECO:0007669"/>
    <property type="project" value="UniProtKB-UniRule"/>
</dbReference>
<dbReference type="GO" id="GO:0006808">
    <property type="term" value="P:regulation of nitrogen utilization"/>
    <property type="evidence" value="ECO:0007669"/>
    <property type="project" value="UniProtKB-UniRule"/>
</dbReference>
<dbReference type="CDD" id="cd04899">
    <property type="entry name" value="ACT_ACR-UUR-like_2"/>
    <property type="match status" value="1"/>
</dbReference>
<dbReference type="CDD" id="cd04900">
    <property type="entry name" value="ACT_UUR-like_1"/>
    <property type="match status" value="1"/>
</dbReference>
<dbReference type="CDD" id="cd00077">
    <property type="entry name" value="HDc"/>
    <property type="match status" value="1"/>
</dbReference>
<dbReference type="CDD" id="cd05401">
    <property type="entry name" value="NT_GlnE_GlnD_like"/>
    <property type="match status" value="1"/>
</dbReference>
<dbReference type="Gene3D" id="3.30.70.260">
    <property type="match status" value="1"/>
</dbReference>
<dbReference type="Gene3D" id="1.10.3210.10">
    <property type="entry name" value="Hypothetical protein af1432"/>
    <property type="match status" value="1"/>
</dbReference>
<dbReference type="HAMAP" id="MF_00277">
    <property type="entry name" value="PII_uridylyl_transf"/>
    <property type="match status" value="1"/>
</dbReference>
<dbReference type="InterPro" id="IPR045865">
    <property type="entry name" value="ACT-like_dom_sf"/>
</dbReference>
<dbReference type="InterPro" id="IPR002912">
    <property type="entry name" value="ACT_dom"/>
</dbReference>
<dbReference type="InterPro" id="IPR003607">
    <property type="entry name" value="HD/PDEase_dom"/>
</dbReference>
<dbReference type="InterPro" id="IPR006674">
    <property type="entry name" value="HD_domain"/>
</dbReference>
<dbReference type="InterPro" id="IPR043519">
    <property type="entry name" value="NT_sf"/>
</dbReference>
<dbReference type="InterPro" id="IPR013546">
    <property type="entry name" value="PII_UdlTrfase/GS_AdlTrfase"/>
</dbReference>
<dbReference type="InterPro" id="IPR002934">
    <property type="entry name" value="Polymerase_NTP_transf_dom"/>
</dbReference>
<dbReference type="InterPro" id="IPR010043">
    <property type="entry name" value="UTase/UR"/>
</dbReference>
<dbReference type="NCBIfam" id="NF002837">
    <property type="entry name" value="PRK03059.1"/>
    <property type="match status" value="1"/>
</dbReference>
<dbReference type="NCBIfam" id="TIGR01693">
    <property type="entry name" value="UTase_glnD"/>
    <property type="match status" value="1"/>
</dbReference>
<dbReference type="PANTHER" id="PTHR47320">
    <property type="entry name" value="BIFUNCTIONAL URIDYLYLTRANSFERASE/URIDYLYL-REMOVING ENZYME"/>
    <property type="match status" value="1"/>
</dbReference>
<dbReference type="PANTHER" id="PTHR47320:SF1">
    <property type="entry name" value="BIFUNCTIONAL URIDYLYLTRANSFERASE_URIDYLYL-REMOVING ENZYME"/>
    <property type="match status" value="1"/>
</dbReference>
<dbReference type="Pfam" id="PF01842">
    <property type="entry name" value="ACT"/>
    <property type="match status" value="1"/>
</dbReference>
<dbReference type="Pfam" id="PF08335">
    <property type="entry name" value="GlnD_UR_UTase"/>
    <property type="match status" value="1"/>
</dbReference>
<dbReference type="Pfam" id="PF01966">
    <property type="entry name" value="HD"/>
    <property type="match status" value="1"/>
</dbReference>
<dbReference type="Pfam" id="PF01909">
    <property type="entry name" value="NTP_transf_2"/>
    <property type="match status" value="1"/>
</dbReference>
<dbReference type="PIRSF" id="PIRSF006288">
    <property type="entry name" value="PII_uridyltransf"/>
    <property type="match status" value="1"/>
</dbReference>
<dbReference type="SMART" id="SM00471">
    <property type="entry name" value="HDc"/>
    <property type="match status" value="1"/>
</dbReference>
<dbReference type="SUPFAM" id="SSF55021">
    <property type="entry name" value="ACT-like"/>
    <property type="match status" value="2"/>
</dbReference>
<dbReference type="SUPFAM" id="SSF109604">
    <property type="entry name" value="HD-domain/PDEase-like"/>
    <property type="match status" value="1"/>
</dbReference>
<dbReference type="SUPFAM" id="SSF81301">
    <property type="entry name" value="Nucleotidyltransferase"/>
    <property type="match status" value="1"/>
</dbReference>
<dbReference type="SUPFAM" id="SSF81593">
    <property type="entry name" value="Nucleotidyltransferase substrate binding subunit/domain"/>
    <property type="match status" value="1"/>
</dbReference>
<dbReference type="PROSITE" id="PS51671">
    <property type="entry name" value="ACT"/>
    <property type="match status" value="2"/>
</dbReference>
<dbReference type="PROSITE" id="PS51831">
    <property type="entry name" value="HD"/>
    <property type="match status" value="1"/>
</dbReference>
<reference key="1">
    <citation type="journal article" date="2003" name="Nat. Genet.">
        <title>Comparative analysis of the genome sequences of Bordetella pertussis, Bordetella parapertussis and Bordetella bronchiseptica.</title>
        <authorList>
            <person name="Parkhill J."/>
            <person name="Sebaihia M."/>
            <person name="Preston A."/>
            <person name="Murphy L.D."/>
            <person name="Thomson N.R."/>
            <person name="Harris D.E."/>
            <person name="Holden M.T.G."/>
            <person name="Churcher C.M."/>
            <person name="Bentley S.D."/>
            <person name="Mungall K.L."/>
            <person name="Cerdeno-Tarraga A.-M."/>
            <person name="Temple L."/>
            <person name="James K.D."/>
            <person name="Harris B."/>
            <person name="Quail M.A."/>
            <person name="Achtman M."/>
            <person name="Atkin R."/>
            <person name="Baker S."/>
            <person name="Basham D."/>
            <person name="Bason N."/>
            <person name="Cherevach I."/>
            <person name="Chillingworth T."/>
            <person name="Collins M."/>
            <person name="Cronin A."/>
            <person name="Davis P."/>
            <person name="Doggett J."/>
            <person name="Feltwell T."/>
            <person name="Goble A."/>
            <person name="Hamlin N."/>
            <person name="Hauser H."/>
            <person name="Holroyd S."/>
            <person name="Jagels K."/>
            <person name="Leather S."/>
            <person name="Moule S."/>
            <person name="Norberczak H."/>
            <person name="O'Neil S."/>
            <person name="Ormond D."/>
            <person name="Price C."/>
            <person name="Rabbinowitsch E."/>
            <person name="Rutter S."/>
            <person name="Sanders M."/>
            <person name="Saunders D."/>
            <person name="Seeger K."/>
            <person name="Sharp S."/>
            <person name="Simmonds M."/>
            <person name="Skelton J."/>
            <person name="Squares R."/>
            <person name="Squares S."/>
            <person name="Stevens K."/>
            <person name="Unwin L."/>
            <person name="Whitehead S."/>
            <person name="Barrell B.G."/>
            <person name="Maskell D.J."/>
        </authorList>
    </citation>
    <scope>NUCLEOTIDE SEQUENCE [LARGE SCALE GENOMIC DNA]</scope>
    <source>
        <strain>12822 / ATCC BAA-587 / NCTC 13253</strain>
    </source>
</reference>
<proteinExistence type="inferred from homology"/>
<comment type="function">
    <text evidence="1">Modifies, by uridylylation and deuridylylation, the PII regulatory proteins (GlnB and homologs), in response to the nitrogen status of the cell that GlnD senses through the glutamine level. Under low glutamine levels, catalyzes the conversion of the PII proteins and UTP to PII-UMP and PPi, while under higher glutamine levels, GlnD hydrolyzes PII-UMP to PII and UMP (deuridylylation). Thus, controls uridylylation state and activity of the PII proteins, and plays an important role in the regulation of nitrogen assimilation and metabolism.</text>
</comment>
<comment type="catalytic activity">
    <reaction evidence="1">
        <text>[protein-PII]-L-tyrosine + UTP = [protein-PII]-uridylyl-L-tyrosine + diphosphate</text>
        <dbReference type="Rhea" id="RHEA:13673"/>
        <dbReference type="Rhea" id="RHEA-COMP:12147"/>
        <dbReference type="Rhea" id="RHEA-COMP:12148"/>
        <dbReference type="ChEBI" id="CHEBI:33019"/>
        <dbReference type="ChEBI" id="CHEBI:46398"/>
        <dbReference type="ChEBI" id="CHEBI:46858"/>
        <dbReference type="ChEBI" id="CHEBI:90602"/>
        <dbReference type="EC" id="2.7.7.59"/>
    </reaction>
</comment>
<comment type="catalytic activity">
    <reaction evidence="1">
        <text>[protein-PII]-uridylyl-L-tyrosine + H2O = [protein-PII]-L-tyrosine + UMP + H(+)</text>
        <dbReference type="Rhea" id="RHEA:48600"/>
        <dbReference type="Rhea" id="RHEA-COMP:12147"/>
        <dbReference type="Rhea" id="RHEA-COMP:12148"/>
        <dbReference type="ChEBI" id="CHEBI:15377"/>
        <dbReference type="ChEBI" id="CHEBI:15378"/>
        <dbReference type="ChEBI" id="CHEBI:46858"/>
        <dbReference type="ChEBI" id="CHEBI:57865"/>
        <dbReference type="ChEBI" id="CHEBI:90602"/>
    </reaction>
</comment>
<comment type="cofactor">
    <cofactor evidence="1">
        <name>Mg(2+)</name>
        <dbReference type="ChEBI" id="CHEBI:18420"/>
    </cofactor>
</comment>
<comment type="activity regulation">
    <text evidence="1">Uridylyltransferase (UTase) activity is inhibited by glutamine, while glutamine activates uridylyl-removing (UR) activity.</text>
</comment>
<comment type="domain">
    <text evidence="1">Has four distinct domains: an N-terminal nucleotidyltransferase (NT) domain responsible for UTase activity, a central HD domain that encodes UR activity, and two C-terminal ACT domains that seem to have a role in glutamine sensing.</text>
</comment>
<comment type="similarity">
    <text evidence="1">Belongs to the GlnD family.</text>
</comment>
<sequence length="865" mass="98453">MPHVDLNPLKQRMQAARAAAVAQFRQHPRPDMLLTELRRIVDQALRELVKLCPLPAGATLAAVGGYGRGELYPHSDVDLLILLPQPPSAADARAVEALVAALWDLGLEPGHSVRTLEDCEREARGDITVETALLESRWLAGSRTLMKRLDSAMQARLDAAVFFQAKRVEMQQRHARYQDTPYALEPNCKESPGGLRDLQVILWMARAAGFGHSWREVAQAGLLTSSEARDLRRAEQAFKRLRIELHLLTGRREDRVLFDLQPGLAAVYGIASTATRRASELLMQRYYWAARLVTQLNVILVQNIEERLFPRPDSDARLIDDDFRNLRERLDIVREDGFERNPTLLLRAFLVMQQHPELIGMSARTLRAIWHSRHRIDAQFRRNPVNRKLFLQILQQPRGIVHELRRMTMLNILPRYLPVFRRIVGQMQHDLFHVYTVDQHTLAVVRNLRRFTMPEHAQEYPLASQLIAGLDRHWLLYVAALFHDIAKGRGGDHSELGAREVRRFAQDHGLDPADAELVEFLVRHHLLMSAVAQKRDLSDPQVVRDFAAQVGDERRLAALYLLTVADIRGTSPRVWNAWKGKLLEDLFRLALAALGGAHADAHTVLTERKDEAARLTRLAGLRDDAREAFWNQLDIAYFLRHDASEIAWHTRHLYYQVAPDEPVVRVRPTEHGEGLQVMVYTRDAPDLFVTTCGYFDAKSLSVQDARVHTTRHGWALDSFIVLAPEGFADLRAQATLVEHELAERLRDPHAARHAHAPRRLPHSHARRSRVFPVMPQAELSPDERSQSWRLSVTATDRPGLLYALARVFAEHGVDLIMAKIMTLGERVEDVFIVSGSALERPRSQMQFERAILDALAGDEPRQQAA</sequence>